<sequence>MIKIGAHMPISKGFDRVPQDTVNIGGNSFQIFPHNARSWGAKLPSDEVATKFKREMKKNGIDWENAFCHSGYLINLASPKEDIWQKSVELLKKEVEICRKLGIRYLNIHPGSHLGTGEEEGIDRIVRGLNEVLNNTEGVVILLENVSQKGGNIGYKLEQLKKIRDLVDQKDRVAVTYDTCHGFDSGYDITKKEGVEALLNEIETLFGLERLKMIHLNDSKYPLGAAKDRHERIGSGFIGEEGFAVFFSFKEIQEVPWILETPGGNEEHAEDIKKVFEIIEKFGIEVD</sequence>
<evidence type="ECO:0000255" key="1">
    <source>
        <dbReference type="HAMAP-Rule" id="MF_00152"/>
    </source>
</evidence>
<reference key="1">
    <citation type="journal article" date="2011" name="J. Bacteriol.">
        <title>Genome sequence of Thermotoga sp. strain RQ2, a hyperthermophilic bacterium isolated from a geothermally heated region of the seafloor near Ribeira Quente, the Azores.</title>
        <authorList>
            <person name="Swithers K.S."/>
            <person name="DiPippo J.L."/>
            <person name="Bruce D.C."/>
            <person name="Detter C."/>
            <person name="Tapia R."/>
            <person name="Han S."/>
            <person name="Saunders E."/>
            <person name="Goodwin L.A."/>
            <person name="Han J."/>
            <person name="Woyke T."/>
            <person name="Pitluck S."/>
            <person name="Pennacchio L."/>
            <person name="Nolan M."/>
            <person name="Mikhailova N."/>
            <person name="Lykidis A."/>
            <person name="Land M.L."/>
            <person name="Brettin T."/>
            <person name="Stetter K.O."/>
            <person name="Nelson K.E."/>
            <person name="Gogarten J.P."/>
            <person name="Noll K.M."/>
        </authorList>
    </citation>
    <scope>NUCLEOTIDE SEQUENCE [LARGE SCALE GENOMIC DNA]</scope>
    <source>
        <strain>RQ2</strain>
    </source>
</reference>
<gene>
    <name evidence="1" type="primary">nfo</name>
    <name type="ordered locus">TRQ2_0570</name>
</gene>
<organism>
    <name type="scientific">Thermotoga sp. (strain RQ2)</name>
    <dbReference type="NCBI Taxonomy" id="126740"/>
    <lineage>
        <taxon>Bacteria</taxon>
        <taxon>Thermotogati</taxon>
        <taxon>Thermotogota</taxon>
        <taxon>Thermotogae</taxon>
        <taxon>Thermotogales</taxon>
        <taxon>Thermotogaceae</taxon>
        <taxon>Thermotoga</taxon>
    </lineage>
</organism>
<accession>B1L9C6</accession>
<feature type="chain" id="PRO_1000096909" description="Probable endonuclease 4">
    <location>
        <begin position="1"/>
        <end position="287"/>
    </location>
</feature>
<feature type="binding site" evidence="1">
    <location>
        <position position="69"/>
    </location>
    <ligand>
        <name>Zn(2+)</name>
        <dbReference type="ChEBI" id="CHEBI:29105"/>
        <label>1</label>
    </ligand>
</feature>
<feature type="binding site" evidence="1">
    <location>
        <position position="109"/>
    </location>
    <ligand>
        <name>Zn(2+)</name>
        <dbReference type="ChEBI" id="CHEBI:29105"/>
        <label>1</label>
    </ligand>
</feature>
<feature type="binding site" evidence="1">
    <location>
        <position position="144"/>
    </location>
    <ligand>
        <name>Zn(2+)</name>
        <dbReference type="ChEBI" id="CHEBI:29105"/>
        <label>1</label>
    </ligand>
</feature>
<feature type="binding site" evidence="1">
    <location>
        <position position="144"/>
    </location>
    <ligand>
        <name>Zn(2+)</name>
        <dbReference type="ChEBI" id="CHEBI:29105"/>
        <label>2</label>
    </ligand>
</feature>
<feature type="binding site" evidence="1">
    <location>
        <position position="178"/>
    </location>
    <ligand>
        <name>Zn(2+)</name>
        <dbReference type="ChEBI" id="CHEBI:29105"/>
        <label>2</label>
    </ligand>
</feature>
<feature type="binding site" evidence="1">
    <location>
        <position position="181"/>
    </location>
    <ligand>
        <name>Zn(2+)</name>
        <dbReference type="ChEBI" id="CHEBI:29105"/>
        <label>3</label>
    </ligand>
</feature>
<feature type="binding site" evidence="1">
    <location>
        <position position="215"/>
    </location>
    <ligand>
        <name>Zn(2+)</name>
        <dbReference type="ChEBI" id="CHEBI:29105"/>
        <label>2</label>
    </ligand>
</feature>
<feature type="binding site" evidence="1">
    <location>
        <position position="228"/>
    </location>
    <ligand>
        <name>Zn(2+)</name>
        <dbReference type="ChEBI" id="CHEBI:29105"/>
        <label>3</label>
    </ligand>
</feature>
<feature type="binding site" evidence="1">
    <location>
        <position position="230"/>
    </location>
    <ligand>
        <name>Zn(2+)</name>
        <dbReference type="ChEBI" id="CHEBI:29105"/>
        <label>3</label>
    </ligand>
</feature>
<feature type="binding site" evidence="1">
    <location>
        <position position="260"/>
    </location>
    <ligand>
        <name>Zn(2+)</name>
        <dbReference type="ChEBI" id="CHEBI:29105"/>
        <label>2</label>
    </ligand>
</feature>
<dbReference type="EC" id="3.1.21.2" evidence="1"/>
<dbReference type="EMBL" id="CP000969">
    <property type="protein sequence ID" value="ACB08924.1"/>
    <property type="molecule type" value="Genomic_DNA"/>
</dbReference>
<dbReference type="RefSeq" id="WP_012310623.1">
    <property type="nucleotide sequence ID" value="NC_010483.1"/>
</dbReference>
<dbReference type="SMR" id="B1L9C6"/>
<dbReference type="KEGG" id="trq:TRQ2_0570"/>
<dbReference type="HOGENOM" id="CLU_025885_0_1_0"/>
<dbReference type="Proteomes" id="UP000001687">
    <property type="component" value="Chromosome"/>
</dbReference>
<dbReference type="GO" id="GO:0008833">
    <property type="term" value="F:deoxyribonuclease IV (phage-T4-induced) activity"/>
    <property type="evidence" value="ECO:0007669"/>
    <property type="project" value="UniProtKB-UniRule"/>
</dbReference>
<dbReference type="GO" id="GO:0003677">
    <property type="term" value="F:DNA binding"/>
    <property type="evidence" value="ECO:0007669"/>
    <property type="project" value="InterPro"/>
</dbReference>
<dbReference type="GO" id="GO:0003906">
    <property type="term" value="F:DNA-(apurinic or apyrimidinic site) endonuclease activity"/>
    <property type="evidence" value="ECO:0007669"/>
    <property type="project" value="TreeGrafter"/>
</dbReference>
<dbReference type="GO" id="GO:0008081">
    <property type="term" value="F:phosphoric diester hydrolase activity"/>
    <property type="evidence" value="ECO:0007669"/>
    <property type="project" value="TreeGrafter"/>
</dbReference>
<dbReference type="GO" id="GO:0008270">
    <property type="term" value="F:zinc ion binding"/>
    <property type="evidence" value="ECO:0007669"/>
    <property type="project" value="UniProtKB-UniRule"/>
</dbReference>
<dbReference type="GO" id="GO:0006284">
    <property type="term" value="P:base-excision repair"/>
    <property type="evidence" value="ECO:0007669"/>
    <property type="project" value="TreeGrafter"/>
</dbReference>
<dbReference type="CDD" id="cd00019">
    <property type="entry name" value="AP2Ec"/>
    <property type="match status" value="1"/>
</dbReference>
<dbReference type="FunFam" id="3.20.20.150:FF:000001">
    <property type="entry name" value="Probable endonuclease 4"/>
    <property type="match status" value="1"/>
</dbReference>
<dbReference type="Gene3D" id="3.20.20.150">
    <property type="entry name" value="Divalent-metal-dependent TIM barrel enzymes"/>
    <property type="match status" value="1"/>
</dbReference>
<dbReference type="HAMAP" id="MF_00152">
    <property type="entry name" value="Nfo"/>
    <property type="match status" value="1"/>
</dbReference>
<dbReference type="InterPro" id="IPR001719">
    <property type="entry name" value="AP_endonuc_2"/>
</dbReference>
<dbReference type="InterPro" id="IPR018246">
    <property type="entry name" value="AP_endonuc_F2_Zn_BS"/>
</dbReference>
<dbReference type="InterPro" id="IPR036237">
    <property type="entry name" value="Xyl_isomerase-like_sf"/>
</dbReference>
<dbReference type="InterPro" id="IPR013022">
    <property type="entry name" value="Xyl_isomerase-like_TIM-brl"/>
</dbReference>
<dbReference type="NCBIfam" id="TIGR00587">
    <property type="entry name" value="nfo"/>
    <property type="match status" value="1"/>
</dbReference>
<dbReference type="PANTHER" id="PTHR21445:SF0">
    <property type="entry name" value="APURINIC-APYRIMIDINIC ENDONUCLEASE"/>
    <property type="match status" value="1"/>
</dbReference>
<dbReference type="PANTHER" id="PTHR21445">
    <property type="entry name" value="ENDONUCLEASE IV ENDODEOXYRIBONUCLEASE IV"/>
    <property type="match status" value="1"/>
</dbReference>
<dbReference type="Pfam" id="PF01261">
    <property type="entry name" value="AP_endonuc_2"/>
    <property type="match status" value="1"/>
</dbReference>
<dbReference type="SMART" id="SM00518">
    <property type="entry name" value="AP2Ec"/>
    <property type="match status" value="1"/>
</dbReference>
<dbReference type="SUPFAM" id="SSF51658">
    <property type="entry name" value="Xylose isomerase-like"/>
    <property type="match status" value="1"/>
</dbReference>
<dbReference type="PROSITE" id="PS00729">
    <property type="entry name" value="AP_NUCLEASE_F2_1"/>
    <property type="match status" value="1"/>
</dbReference>
<dbReference type="PROSITE" id="PS00730">
    <property type="entry name" value="AP_NUCLEASE_F2_2"/>
    <property type="match status" value="1"/>
</dbReference>
<dbReference type="PROSITE" id="PS00731">
    <property type="entry name" value="AP_NUCLEASE_F2_3"/>
    <property type="match status" value="1"/>
</dbReference>
<dbReference type="PROSITE" id="PS51432">
    <property type="entry name" value="AP_NUCLEASE_F2_4"/>
    <property type="match status" value="1"/>
</dbReference>
<comment type="function">
    <text evidence="1">Endonuclease IV plays a role in DNA repair. It cleaves phosphodiester bonds at apurinic or apyrimidinic (AP) sites, generating a 3'-hydroxyl group and a 5'-terminal sugar phosphate.</text>
</comment>
<comment type="catalytic activity">
    <reaction evidence="1">
        <text>Endonucleolytic cleavage to 5'-phosphooligonucleotide end-products.</text>
        <dbReference type="EC" id="3.1.21.2"/>
    </reaction>
</comment>
<comment type="cofactor">
    <cofactor evidence="1">
        <name>Zn(2+)</name>
        <dbReference type="ChEBI" id="CHEBI:29105"/>
    </cofactor>
    <text evidence="1">Binds 3 Zn(2+) ions.</text>
</comment>
<comment type="similarity">
    <text evidence="1">Belongs to the AP endonuclease 2 family.</text>
</comment>
<proteinExistence type="inferred from homology"/>
<keyword id="KW-0227">DNA damage</keyword>
<keyword id="KW-0234">DNA repair</keyword>
<keyword id="KW-0255">Endonuclease</keyword>
<keyword id="KW-0378">Hydrolase</keyword>
<keyword id="KW-0479">Metal-binding</keyword>
<keyword id="KW-0540">Nuclease</keyword>
<keyword id="KW-0862">Zinc</keyword>
<protein>
    <recommendedName>
        <fullName evidence="1">Probable endonuclease 4</fullName>
        <ecNumber evidence="1">3.1.21.2</ecNumber>
    </recommendedName>
    <alternativeName>
        <fullName evidence="1">Endodeoxyribonuclease IV</fullName>
    </alternativeName>
    <alternativeName>
        <fullName evidence="1">Endonuclease IV</fullName>
    </alternativeName>
</protein>
<name>END4_THESQ</name>